<evidence type="ECO:0000250" key="1"/>
<evidence type="ECO:0000250" key="2">
    <source>
        <dbReference type="UniProtKB" id="Q40313"/>
    </source>
</evidence>
<evidence type="ECO:0000255" key="3">
    <source>
        <dbReference type="PROSITE-ProRule" id="PRU01019"/>
    </source>
</evidence>
<evidence type="ECO:0000305" key="4"/>
<protein>
    <recommendedName>
        <fullName>Probable caffeoyl-CoA O-methyltransferase At4g26220</fullName>
        <ecNumber>2.1.1.104</ecNumber>
    </recommendedName>
    <alternativeName>
        <fullName>Trans-caffeoyl-CoA 3-O-methyltransferase</fullName>
        <shortName>CCoAMT</shortName>
        <shortName>CCoAOMT</shortName>
    </alternativeName>
</protein>
<sequence>MAKDEAKGLLKSEELYKYILETSVYPREPEVLRELRNITHNHPQAGMATAPDAGQLMGMLLNLVNARKTIEVGVFTGYSLLLTALTLPEDGKVIAIDMNRDSYEIGLPVIKKAGVEHKIDFKESEALPALDELLNNKVNEGGFDFAFVDADKLNYWNYHERLIRLIKVGGIIVYDNTLWGGSVAEPDSSTPEWRIEVKKATLELNKKLSADQRVQISQAALGDGITICRRLY</sequence>
<organism>
    <name type="scientific">Arabidopsis thaliana</name>
    <name type="common">Mouse-ear cress</name>
    <dbReference type="NCBI Taxonomy" id="3702"/>
    <lineage>
        <taxon>Eukaryota</taxon>
        <taxon>Viridiplantae</taxon>
        <taxon>Streptophyta</taxon>
        <taxon>Embryophyta</taxon>
        <taxon>Tracheophyta</taxon>
        <taxon>Spermatophyta</taxon>
        <taxon>Magnoliopsida</taxon>
        <taxon>eudicotyledons</taxon>
        <taxon>Gunneridae</taxon>
        <taxon>Pentapetalae</taxon>
        <taxon>rosids</taxon>
        <taxon>malvids</taxon>
        <taxon>Brassicales</taxon>
        <taxon>Brassicaceae</taxon>
        <taxon>Camelineae</taxon>
        <taxon>Arabidopsis</taxon>
    </lineage>
</organism>
<keyword id="KW-0438">Lignin biosynthesis</keyword>
<keyword id="KW-0479">Metal-binding</keyword>
<keyword id="KW-0489">Methyltransferase</keyword>
<keyword id="KW-1185">Reference proteome</keyword>
<keyword id="KW-0949">S-adenosyl-L-methionine</keyword>
<keyword id="KW-0808">Transferase</keyword>
<dbReference type="EC" id="2.1.1.104"/>
<dbReference type="EMBL" id="AL049171">
    <property type="protein sequence ID" value="CAB38951.1"/>
    <property type="molecule type" value="Genomic_DNA"/>
</dbReference>
<dbReference type="EMBL" id="AL161564">
    <property type="protein sequence ID" value="CAB79477.1"/>
    <property type="molecule type" value="Genomic_DNA"/>
</dbReference>
<dbReference type="EMBL" id="CP002687">
    <property type="protein sequence ID" value="AEE85172.1"/>
    <property type="molecule type" value="Genomic_DNA"/>
</dbReference>
<dbReference type="EMBL" id="AF360317">
    <property type="protein sequence ID" value="AAK26027.1"/>
    <property type="molecule type" value="mRNA"/>
</dbReference>
<dbReference type="EMBL" id="AY056313">
    <property type="protein sequence ID" value="AAL07162.1"/>
    <property type="molecule type" value="mRNA"/>
</dbReference>
<dbReference type="EMBL" id="AY087244">
    <property type="protein sequence ID" value="AAM64800.1"/>
    <property type="molecule type" value="mRNA"/>
</dbReference>
<dbReference type="PIR" id="T06006">
    <property type="entry name" value="T06006"/>
</dbReference>
<dbReference type="RefSeq" id="NP_567739.1">
    <property type="nucleotide sequence ID" value="NM_118755.4"/>
</dbReference>
<dbReference type="SMR" id="Q9C5D7"/>
<dbReference type="FunCoup" id="Q9C5D7">
    <property type="interactions" value="712"/>
</dbReference>
<dbReference type="STRING" id="3702.Q9C5D7"/>
<dbReference type="PaxDb" id="3702-AT4G26220.1"/>
<dbReference type="ProteomicsDB" id="239188"/>
<dbReference type="EnsemblPlants" id="AT4G26220.1">
    <property type="protein sequence ID" value="AT4G26220.1"/>
    <property type="gene ID" value="AT4G26220"/>
</dbReference>
<dbReference type="GeneID" id="828728"/>
<dbReference type="Gramene" id="AT4G26220.1">
    <property type="protein sequence ID" value="AT4G26220.1"/>
    <property type="gene ID" value="AT4G26220"/>
</dbReference>
<dbReference type="KEGG" id="ath:AT4G26220"/>
<dbReference type="Araport" id="AT4G26220"/>
<dbReference type="TAIR" id="AT4G26220">
    <property type="gene designation" value="CCOAOMT7"/>
</dbReference>
<dbReference type="eggNOG" id="KOG1663">
    <property type="taxonomic scope" value="Eukaryota"/>
</dbReference>
<dbReference type="HOGENOM" id="CLU_067676_5_0_1"/>
<dbReference type="InParanoid" id="Q9C5D7"/>
<dbReference type="OMA" id="PAYFEWA"/>
<dbReference type="OrthoDB" id="10251242at2759"/>
<dbReference type="PhylomeDB" id="Q9C5D7"/>
<dbReference type="BioCyc" id="ARA:AT4G26220-MONOMER"/>
<dbReference type="BioCyc" id="MetaCyc:AT4G26220-MONOMER"/>
<dbReference type="BRENDA" id="2.1.1.104">
    <property type="organism ID" value="399"/>
</dbReference>
<dbReference type="UniPathway" id="UPA00711"/>
<dbReference type="PRO" id="PR:Q9C5D7"/>
<dbReference type="Proteomes" id="UP000006548">
    <property type="component" value="Chromosome 4"/>
</dbReference>
<dbReference type="ExpressionAtlas" id="Q9C5D7">
    <property type="expression patterns" value="baseline and differential"/>
</dbReference>
<dbReference type="GO" id="GO:0042409">
    <property type="term" value="F:caffeoyl-CoA O-methyltransferase activity"/>
    <property type="evidence" value="ECO:0000314"/>
    <property type="project" value="TAIR"/>
</dbReference>
<dbReference type="GO" id="GO:0046872">
    <property type="term" value="F:metal ion binding"/>
    <property type="evidence" value="ECO:0007669"/>
    <property type="project" value="UniProtKB-KW"/>
</dbReference>
<dbReference type="GO" id="GO:0009809">
    <property type="term" value="P:lignin biosynthetic process"/>
    <property type="evidence" value="ECO:0007669"/>
    <property type="project" value="UniProtKB-KW"/>
</dbReference>
<dbReference type="GO" id="GO:0032259">
    <property type="term" value="P:methylation"/>
    <property type="evidence" value="ECO:0007669"/>
    <property type="project" value="UniProtKB-KW"/>
</dbReference>
<dbReference type="CDD" id="cd02440">
    <property type="entry name" value="AdoMet_MTases"/>
    <property type="match status" value="1"/>
</dbReference>
<dbReference type="FunFam" id="3.40.50.150:FF:000147">
    <property type="entry name" value="Caffeoyl-CoA O-methyltransferase 1"/>
    <property type="match status" value="1"/>
</dbReference>
<dbReference type="Gene3D" id="3.40.50.150">
    <property type="entry name" value="Vaccinia Virus protein VP39"/>
    <property type="match status" value="1"/>
</dbReference>
<dbReference type="InterPro" id="IPR050362">
    <property type="entry name" value="Cation-dep_OMT"/>
</dbReference>
<dbReference type="InterPro" id="IPR029063">
    <property type="entry name" value="SAM-dependent_MTases_sf"/>
</dbReference>
<dbReference type="InterPro" id="IPR002935">
    <property type="entry name" value="SAM_O-MeTrfase"/>
</dbReference>
<dbReference type="PANTHER" id="PTHR10509:SF82">
    <property type="entry name" value="CAFFEOYL-COA O-METHYLTRANSFERASE-LIKE"/>
    <property type="match status" value="1"/>
</dbReference>
<dbReference type="PANTHER" id="PTHR10509">
    <property type="entry name" value="O-METHYLTRANSFERASE-RELATED"/>
    <property type="match status" value="1"/>
</dbReference>
<dbReference type="Pfam" id="PF01596">
    <property type="entry name" value="Methyltransf_3"/>
    <property type="match status" value="1"/>
</dbReference>
<dbReference type="SUPFAM" id="SSF53335">
    <property type="entry name" value="S-adenosyl-L-methionine-dependent methyltransferases"/>
    <property type="match status" value="1"/>
</dbReference>
<dbReference type="PROSITE" id="PS51682">
    <property type="entry name" value="SAM_OMT_I"/>
    <property type="match status" value="1"/>
</dbReference>
<proteinExistence type="evidence at transcript level"/>
<reference key="1">
    <citation type="journal article" date="1999" name="Nature">
        <title>Sequence and analysis of chromosome 4 of the plant Arabidopsis thaliana.</title>
        <authorList>
            <person name="Mayer K.F.X."/>
            <person name="Schueller C."/>
            <person name="Wambutt R."/>
            <person name="Murphy G."/>
            <person name="Volckaert G."/>
            <person name="Pohl T."/>
            <person name="Duesterhoeft A."/>
            <person name="Stiekema W."/>
            <person name="Entian K.-D."/>
            <person name="Terryn N."/>
            <person name="Harris B."/>
            <person name="Ansorge W."/>
            <person name="Brandt P."/>
            <person name="Grivell L.A."/>
            <person name="Rieger M."/>
            <person name="Weichselgartner M."/>
            <person name="de Simone V."/>
            <person name="Obermaier B."/>
            <person name="Mache R."/>
            <person name="Mueller M."/>
            <person name="Kreis M."/>
            <person name="Delseny M."/>
            <person name="Puigdomenech P."/>
            <person name="Watson M."/>
            <person name="Schmidtheini T."/>
            <person name="Reichert B."/>
            <person name="Portetelle D."/>
            <person name="Perez-Alonso M."/>
            <person name="Boutry M."/>
            <person name="Bancroft I."/>
            <person name="Vos P."/>
            <person name="Hoheisel J."/>
            <person name="Zimmermann W."/>
            <person name="Wedler H."/>
            <person name="Ridley P."/>
            <person name="Langham S.-A."/>
            <person name="McCullagh B."/>
            <person name="Bilham L."/>
            <person name="Robben J."/>
            <person name="van der Schueren J."/>
            <person name="Grymonprez B."/>
            <person name="Chuang Y.-J."/>
            <person name="Vandenbussche F."/>
            <person name="Braeken M."/>
            <person name="Weltjens I."/>
            <person name="Voet M."/>
            <person name="Bastiaens I."/>
            <person name="Aert R."/>
            <person name="Defoor E."/>
            <person name="Weitzenegger T."/>
            <person name="Bothe G."/>
            <person name="Ramsperger U."/>
            <person name="Hilbert H."/>
            <person name="Braun M."/>
            <person name="Holzer E."/>
            <person name="Brandt A."/>
            <person name="Peters S."/>
            <person name="van Staveren M."/>
            <person name="Dirkse W."/>
            <person name="Mooijman P."/>
            <person name="Klein Lankhorst R."/>
            <person name="Rose M."/>
            <person name="Hauf J."/>
            <person name="Koetter P."/>
            <person name="Berneiser S."/>
            <person name="Hempel S."/>
            <person name="Feldpausch M."/>
            <person name="Lamberth S."/>
            <person name="Van den Daele H."/>
            <person name="De Keyser A."/>
            <person name="Buysshaert C."/>
            <person name="Gielen J."/>
            <person name="Villarroel R."/>
            <person name="De Clercq R."/>
            <person name="van Montagu M."/>
            <person name="Rogers J."/>
            <person name="Cronin A."/>
            <person name="Quail M.A."/>
            <person name="Bray-Allen S."/>
            <person name="Clark L."/>
            <person name="Doggett J."/>
            <person name="Hall S."/>
            <person name="Kay M."/>
            <person name="Lennard N."/>
            <person name="McLay K."/>
            <person name="Mayes R."/>
            <person name="Pettett A."/>
            <person name="Rajandream M.A."/>
            <person name="Lyne M."/>
            <person name="Benes V."/>
            <person name="Rechmann S."/>
            <person name="Borkova D."/>
            <person name="Bloecker H."/>
            <person name="Scharfe M."/>
            <person name="Grimm M."/>
            <person name="Loehnert T.-H."/>
            <person name="Dose S."/>
            <person name="de Haan M."/>
            <person name="Maarse A.C."/>
            <person name="Schaefer M."/>
            <person name="Mueller-Auer S."/>
            <person name="Gabel C."/>
            <person name="Fuchs M."/>
            <person name="Fartmann B."/>
            <person name="Granderath K."/>
            <person name="Dauner D."/>
            <person name="Herzl A."/>
            <person name="Neumann S."/>
            <person name="Argiriou A."/>
            <person name="Vitale D."/>
            <person name="Liguori R."/>
            <person name="Piravandi E."/>
            <person name="Massenet O."/>
            <person name="Quigley F."/>
            <person name="Clabauld G."/>
            <person name="Muendlein A."/>
            <person name="Felber R."/>
            <person name="Schnabl S."/>
            <person name="Hiller R."/>
            <person name="Schmidt W."/>
            <person name="Lecharny A."/>
            <person name="Aubourg S."/>
            <person name="Chefdor F."/>
            <person name="Cooke R."/>
            <person name="Berger C."/>
            <person name="Monfort A."/>
            <person name="Casacuberta E."/>
            <person name="Gibbons T."/>
            <person name="Weber N."/>
            <person name="Vandenbol M."/>
            <person name="Bargues M."/>
            <person name="Terol J."/>
            <person name="Torres A."/>
            <person name="Perez-Perez A."/>
            <person name="Purnelle B."/>
            <person name="Bent E."/>
            <person name="Johnson S."/>
            <person name="Tacon D."/>
            <person name="Jesse T."/>
            <person name="Heijnen L."/>
            <person name="Schwarz S."/>
            <person name="Scholler P."/>
            <person name="Heber S."/>
            <person name="Francs P."/>
            <person name="Bielke C."/>
            <person name="Frishman D."/>
            <person name="Haase D."/>
            <person name="Lemcke K."/>
            <person name="Mewes H.-W."/>
            <person name="Stocker S."/>
            <person name="Zaccaria P."/>
            <person name="Bevan M."/>
            <person name="Wilson R.K."/>
            <person name="de la Bastide M."/>
            <person name="Habermann K."/>
            <person name="Parnell L."/>
            <person name="Dedhia N."/>
            <person name="Gnoj L."/>
            <person name="Schutz K."/>
            <person name="Huang E."/>
            <person name="Spiegel L."/>
            <person name="Sekhon M."/>
            <person name="Murray J."/>
            <person name="Sheet P."/>
            <person name="Cordes M."/>
            <person name="Abu-Threideh J."/>
            <person name="Stoneking T."/>
            <person name="Kalicki J."/>
            <person name="Graves T."/>
            <person name="Harmon G."/>
            <person name="Edwards J."/>
            <person name="Latreille P."/>
            <person name="Courtney L."/>
            <person name="Cloud J."/>
            <person name="Abbott A."/>
            <person name="Scott K."/>
            <person name="Johnson D."/>
            <person name="Minx P."/>
            <person name="Bentley D."/>
            <person name="Fulton B."/>
            <person name="Miller N."/>
            <person name="Greco T."/>
            <person name="Kemp K."/>
            <person name="Kramer J."/>
            <person name="Fulton L."/>
            <person name="Mardis E."/>
            <person name="Dante M."/>
            <person name="Pepin K."/>
            <person name="Hillier L.W."/>
            <person name="Nelson J."/>
            <person name="Spieth J."/>
            <person name="Ryan E."/>
            <person name="Andrews S."/>
            <person name="Geisel C."/>
            <person name="Layman D."/>
            <person name="Du H."/>
            <person name="Ali J."/>
            <person name="Berghoff A."/>
            <person name="Jones K."/>
            <person name="Drone K."/>
            <person name="Cotton M."/>
            <person name="Joshu C."/>
            <person name="Antonoiu B."/>
            <person name="Zidanic M."/>
            <person name="Strong C."/>
            <person name="Sun H."/>
            <person name="Lamar B."/>
            <person name="Yordan C."/>
            <person name="Ma P."/>
            <person name="Zhong J."/>
            <person name="Preston R."/>
            <person name="Vil D."/>
            <person name="Shekher M."/>
            <person name="Matero A."/>
            <person name="Shah R."/>
            <person name="Swaby I.K."/>
            <person name="O'Shaughnessy A."/>
            <person name="Rodriguez M."/>
            <person name="Hoffman J."/>
            <person name="Till S."/>
            <person name="Granat S."/>
            <person name="Shohdy N."/>
            <person name="Hasegawa A."/>
            <person name="Hameed A."/>
            <person name="Lodhi M."/>
            <person name="Johnson A."/>
            <person name="Chen E."/>
            <person name="Marra M.A."/>
            <person name="Martienssen R."/>
            <person name="McCombie W.R."/>
        </authorList>
    </citation>
    <scope>NUCLEOTIDE SEQUENCE [LARGE SCALE GENOMIC DNA]</scope>
    <source>
        <strain>cv. Columbia</strain>
    </source>
</reference>
<reference key="2">
    <citation type="journal article" date="2017" name="Plant J.">
        <title>Araport11: a complete reannotation of the Arabidopsis thaliana reference genome.</title>
        <authorList>
            <person name="Cheng C.Y."/>
            <person name="Krishnakumar V."/>
            <person name="Chan A.P."/>
            <person name="Thibaud-Nissen F."/>
            <person name="Schobel S."/>
            <person name="Town C.D."/>
        </authorList>
    </citation>
    <scope>GENOME REANNOTATION</scope>
    <source>
        <strain>cv. Columbia</strain>
    </source>
</reference>
<reference key="3">
    <citation type="journal article" date="2003" name="Science">
        <title>Empirical analysis of transcriptional activity in the Arabidopsis genome.</title>
        <authorList>
            <person name="Yamada K."/>
            <person name="Lim J."/>
            <person name="Dale J.M."/>
            <person name="Chen H."/>
            <person name="Shinn P."/>
            <person name="Palm C.J."/>
            <person name="Southwick A.M."/>
            <person name="Wu H.C."/>
            <person name="Kim C.J."/>
            <person name="Nguyen M."/>
            <person name="Pham P.K."/>
            <person name="Cheuk R.F."/>
            <person name="Karlin-Newmann G."/>
            <person name="Liu S.X."/>
            <person name="Lam B."/>
            <person name="Sakano H."/>
            <person name="Wu T."/>
            <person name="Yu G."/>
            <person name="Miranda M."/>
            <person name="Quach H.L."/>
            <person name="Tripp M."/>
            <person name="Chang C.H."/>
            <person name="Lee J.M."/>
            <person name="Toriumi M.J."/>
            <person name="Chan M.M."/>
            <person name="Tang C.C."/>
            <person name="Onodera C.S."/>
            <person name="Deng J.M."/>
            <person name="Akiyama K."/>
            <person name="Ansari Y."/>
            <person name="Arakawa T."/>
            <person name="Banh J."/>
            <person name="Banno F."/>
            <person name="Bowser L."/>
            <person name="Brooks S.Y."/>
            <person name="Carninci P."/>
            <person name="Chao Q."/>
            <person name="Choy N."/>
            <person name="Enju A."/>
            <person name="Goldsmith A.D."/>
            <person name="Gurjal M."/>
            <person name="Hansen N.F."/>
            <person name="Hayashizaki Y."/>
            <person name="Johnson-Hopson C."/>
            <person name="Hsuan V.W."/>
            <person name="Iida K."/>
            <person name="Karnes M."/>
            <person name="Khan S."/>
            <person name="Koesema E."/>
            <person name="Ishida J."/>
            <person name="Jiang P.X."/>
            <person name="Jones T."/>
            <person name="Kawai J."/>
            <person name="Kamiya A."/>
            <person name="Meyers C."/>
            <person name="Nakajima M."/>
            <person name="Narusaka M."/>
            <person name="Seki M."/>
            <person name="Sakurai T."/>
            <person name="Satou M."/>
            <person name="Tamse R."/>
            <person name="Vaysberg M."/>
            <person name="Wallender E.K."/>
            <person name="Wong C."/>
            <person name="Yamamura Y."/>
            <person name="Yuan S."/>
            <person name="Shinozaki K."/>
            <person name="Davis R.W."/>
            <person name="Theologis A."/>
            <person name="Ecker J.R."/>
        </authorList>
    </citation>
    <scope>NUCLEOTIDE SEQUENCE [LARGE SCALE MRNA]</scope>
    <source>
        <strain>cv. Columbia</strain>
    </source>
</reference>
<reference key="4">
    <citation type="submission" date="2002-03" db="EMBL/GenBank/DDBJ databases">
        <title>Full-length cDNA from Arabidopsis thaliana.</title>
        <authorList>
            <person name="Brover V.V."/>
            <person name="Troukhan M.E."/>
            <person name="Alexandrov N.A."/>
            <person name="Lu Y.-P."/>
            <person name="Flavell R.B."/>
            <person name="Feldmann K.A."/>
        </authorList>
    </citation>
    <scope>NUCLEOTIDE SEQUENCE [LARGE SCALE MRNA]</scope>
</reference>
<name>CAMT3_ARATH</name>
<feature type="chain" id="PRO_0000165678" description="Probable caffeoyl-CoA O-methyltransferase At4g26220">
    <location>
        <begin position="1"/>
        <end position="232"/>
    </location>
</feature>
<feature type="binding site" evidence="2">
    <location>
        <position position="7"/>
    </location>
    <ligand>
        <name>substrate</name>
    </ligand>
</feature>
<feature type="binding site" evidence="3">
    <location>
        <position position="49"/>
    </location>
    <ligand>
        <name>S-adenosyl-L-methionine</name>
        <dbReference type="ChEBI" id="CHEBI:59789"/>
    </ligand>
</feature>
<feature type="binding site" evidence="3">
    <location>
        <position position="71"/>
    </location>
    <ligand>
        <name>S-adenosyl-L-methionine</name>
        <dbReference type="ChEBI" id="CHEBI:59789"/>
    </ligand>
</feature>
<feature type="binding site" evidence="3">
    <location>
        <begin position="73"/>
        <end position="74"/>
    </location>
    <ligand>
        <name>S-adenosyl-L-methionine</name>
        <dbReference type="ChEBI" id="CHEBI:59789"/>
    </ligand>
</feature>
<feature type="binding site" evidence="3">
    <location>
        <position position="79"/>
    </location>
    <ligand>
        <name>S-adenosyl-L-methionine</name>
        <dbReference type="ChEBI" id="CHEBI:59789"/>
    </ligand>
</feature>
<feature type="binding site" evidence="3">
    <location>
        <position position="97"/>
    </location>
    <ligand>
        <name>S-adenosyl-L-methionine</name>
        <dbReference type="ChEBI" id="CHEBI:59789"/>
    </ligand>
</feature>
<feature type="binding site" evidence="3">
    <location>
        <position position="126"/>
    </location>
    <ligand>
        <name>S-adenosyl-L-methionine</name>
        <dbReference type="ChEBI" id="CHEBI:59789"/>
    </ligand>
</feature>
<feature type="binding site" evidence="3">
    <location>
        <position position="149"/>
    </location>
    <ligand>
        <name>a divalent metal cation</name>
        <dbReference type="ChEBI" id="CHEBI:60240"/>
    </ligand>
</feature>
<feature type="binding site" evidence="2">
    <location>
        <position position="149"/>
    </location>
    <ligand>
        <name>substrate</name>
    </ligand>
</feature>
<feature type="binding site" evidence="3">
    <location>
        <position position="151"/>
    </location>
    <ligand>
        <name>S-adenosyl-L-methionine</name>
        <dbReference type="ChEBI" id="CHEBI:59789"/>
    </ligand>
</feature>
<feature type="binding site" evidence="3">
    <location>
        <position position="175"/>
    </location>
    <ligand>
        <name>a divalent metal cation</name>
        <dbReference type="ChEBI" id="CHEBI:60240"/>
    </ligand>
</feature>
<feature type="binding site" evidence="3">
    <location>
        <position position="176"/>
    </location>
    <ligand>
        <name>a divalent metal cation</name>
        <dbReference type="ChEBI" id="CHEBI:60240"/>
    </ligand>
</feature>
<feature type="sequence conflict" description="In Ref. 1; CAB38951." evidence="4" ref="1">
    <original>K</original>
    <variation>KVCPYILISTL</variation>
    <location>
        <position position="17"/>
    </location>
</feature>
<gene>
    <name type="ordered locus">At4g26220</name>
    <name type="ORF">T25K17.30</name>
</gene>
<comment type="function">
    <text evidence="1">Methylates caffeoyl-CoA to feruloyl-CoA and 5-hydroxyferuloyl-CoA to sinapoyl-CoA. Plays a role in the synthesis of feruloylated polysaccharides. Involved in the reinforcement of the plant cell wall. Also involved in the responding to wounding or pathogen challenge by the increased formation of cell wall-bound ferulic acid polymers (By similarity).</text>
</comment>
<comment type="catalytic activity">
    <reaction>
        <text>(E)-caffeoyl-CoA + S-adenosyl-L-methionine = (E)-feruloyl-CoA + S-adenosyl-L-homocysteine + H(+)</text>
        <dbReference type="Rhea" id="RHEA:16925"/>
        <dbReference type="ChEBI" id="CHEBI:15378"/>
        <dbReference type="ChEBI" id="CHEBI:57856"/>
        <dbReference type="ChEBI" id="CHEBI:59789"/>
        <dbReference type="ChEBI" id="CHEBI:87136"/>
        <dbReference type="ChEBI" id="CHEBI:87305"/>
        <dbReference type="EC" id="2.1.1.104"/>
    </reaction>
</comment>
<comment type="cofactor">
    <cofactor evidence="2">
        <name>a divalent metal cation</name>
        <dbReference type="ChEBI" id="CHEBI:60240"/>
    </cofactor>
    <text evidence="2">Binds 1 divalent metal cation per subunit.</text>
</comment>
<comment type="pathway">
    <text>Aromatic compound metabolism; phenylpropanoid biosynthesis.</text>
</comment>
<comment type="similarity">
    <text evidence="3">Belongs to the class I-like SAM-binding methyltransferase superfamily. Cation-dependent O-methyltransferase family. CCoAMT subfamily.</text>
</comment>
<accession>Q9C5D7</accession>
<accession>Q8LBF3</accession>
<accession>Q9STR2</accession>